<dbReference type="EC" id="2.7.7.6" evidence="1"/>
<dbReference type="EMBL" id="CP000447">
    <property type="protein sequence ID" value="ABI70004.1"/>
    <property type="molecule type" value="Genomic_DNA"/>
</dbReference>
<dbReference type="RefSeq" id="WP_011635633.1">
    <property type="nucleotide sequence ID" value="NC_008345.1"/>
</dbReference>
<dbReference type="SMR" id="Q089R1"/>
<dbReference type="STRING" id="318167.Sfri_0141"/>
<dbReference type="KEGG" id="sfr:Sfri_0141"/>
<dbReference type="eggNOG" id="COG0085">
    <property type="taxonomic scope" value="Bacteria"/>
</dbReference>
<dbReference type="HOGENOM" id="CLU_000524_4_3_6"/>
<dbReference type="OrthoDB" id="9803954at2"/>
<dbReference type="Proteomes" id="UP000000684">
    <property type="component" value="Chromosome"/>
</dbReference>
<dbReference type="GO" id="GO:0000428">
    <property type="term" value="C:DNA-directed RNA polymerase complex"/>
    <property type="evidence" value="ECO:0007669"/>
    <property type="project" value="UniProtKB-KW"/>
</dbReference>
<dbReference type="GO" id="GO:0003677">
    <property type="term" value="F:DNA binding"/>
    <property type="evidence" value="ECO:0007669"/>
    <property type="project" value="UniProtKB-UniRule"/>
</dbReference>
<dbReference type="GO" id="GO:0003899">
    <property type="term" value="F:DNA-directed RNA polymerase activity"/>
    <property type="evidence" value="ECO:0007669"/>
    <property type="project" value="UniProtKB-UniRule"/>
</dbReference>
<dbReference type="GO" id="GO:0032549">
    <property type="term" value="F:ribonucleoside binding"/>
    <property type="evidence" value="ECO:0007669"/>
    <property type="project" value="InterPro"/>
</dbReference>
<dbReference type="GO" id="GO:0006351">
    <property type="term" value="P:DNA-templated transcription"/>
    <property type="evidence" value="ECO:0007669"/>
    <property type="project" value="UniProtKB-UniRule"/>
</dbReference>
<dbReference type="CDD" id="cd00653">
    <property type="entry name" value="RNA_pol_B_RPB2"/>
    <property type="match status" value="1"/>
</dbReference>
<dbReference type="FunFam" id="2.40.270.10:FF:000003">
    <property type="entry name" value="DNA-directed RNA polymerase subunit beta"/>
    <property type="match status" value="1"/>
</dbReference>
<dbReference type="FunFam" id="2.40.270.10:FF:000004">
    <property type="entry name" value="DNA-directed RNA polymerase subunit beta"/>
    <property type="match status" value="1"/>
</dbReference>
<dbReference type="FunFam" id="2.40.50.100:FF:000006">
    <property type="entry name" value="DNA-directed RNA polymerase subunit beta"/>
    <property type="match status" value="1"/>
</dbReference>
<dbReference type="FunFam" id="2.40.50.150:FF:000001">
    <property type="entry name" value="DNA-directed RNA polymerase subunit beta"/>
    <property type="match status" value="1"/>
</dbReference>
<dbReference type="FunFam" id="3.90.1100.10:FF:000002">
    <property type="entry name" value="DNA-directed RNA polymerase subunit beta"/>
    <property type="match status" value="1"/>
</dbReference>
<dbReference type="FunFam" id="3.90.1110.10:FF:000001">
    <property type="entry name" value="DNA-directed RNA polymerase subunit beta"/>
    <property type="match status" value="1"/>
</dbReference>
<dbReference type="FunFam" id="3.90.1110.10:FF:000004">
    <property type="entry name" value="DNA-directed RNA polymerase subunit beta"/>
    <property type="match status" value="1"/>
</dbReference>
<dbReference type="FunFam" id="3.90.1800.10:FF:000001">
    <property type="entry name" value="DNA-directed RNA polymerase subunit beta"/>
    <property type="match status" value="1"/>
</dbReference>
<dbReference type="Gene3D" id="2.40.50.100">
    <property type="match status" value="1"/>
</dbReference>
<dbReference type="Gene3D" id="2.40.50.150">
    <property type="match status" value="1"/>
</dbReference>
<dbReference type="Gene3D" id="3.90.1100.10">
    <property type="match status" value="2"/>
</dbReference>
<dbReference type="Gene3D" id="2.30.150.10">
    <property type="entry name" value="DNA-directed RNA polymerase, beta subunit, external 1 domain"/>
    <property type="match status" value="1"/>
</dbReference>
<dbReference type="Gene3D" id="2.40.270.10">
    <property type="entry name" value="DNA-directed RNA polymerase, subunit 2, domain 6"/>
    <property type="match status" value="1"/>
</dbReference>
<dbReference type="Gene3D" id="3.90.1800.10">
    <property type="entry name" value="RNA polymerase alpha subunit dimerisation domain"/>
    <property type="match status" value="1"/>
</dbReference>
<dbReference type="Gene3D" id="3.90.1110.10">
    <property type="entry name" value="RNA polymerase Rpb2, domain 2"/>
    <property type="match status" value="1"/>
</dbReference>
<dbReference type="HAMAP" id="MF_01321">
    <property type="entry name" value="RNApol_bact_RpoB"/>
    <property type="match status" value="1"/>
</dbReference>
<dbReference type="InterPro" id="IPR042107">
    <property type="entry name" value="DNA-dir_RNA_pol_bsu_ext_1_sf"/>
</dbReference>
<dbReference type="InterPro" id="IPR019462">
    <property type="entry name" value="DNA-dir_RNA_pol_bsu_external_1"/>
</dbReference>
<dbReference type="InterPro" id="IPR015712">
    <property type="entry name" value="DNA-dir_RNA_pol_su2"/>
</dbReference>
<dbReference type="InterPro" id="IPR007120">
    <property type="entry name" value="DNA-dir_RNAP_su2_dom"/>
</dbReference>
<dbReference type="InterPro" id="IPR037033">
    <property type="entry name" value="DNA-dir_RNAP_su2_hyb_sf"/>
</dbReference>
<dbReference type="InterPro" id="IPR010243">
    <property type="entry name" value="RNA_pol_bsu_bac"/>
</dbReference>
<dbReference type="InterPro" id="IPR007121">
    <property type="entry name" value="RNA_pol_bsu_CS"/>
</dbReference>
<dbReference type="InterPro" id="IPR007644">
    <property type="entry name" value="RNA_pol_bsu_protrusion"/>
</dbReference>
<dbReference type="InterPro" id="IPR007642">
    <property type="entry name" value="RNA_pol_Rpb2_2"/>
</dbReference>
<dbReference type="InterPro" id="IPR037034">
    <property type="entry name" value="RNA_pol_Rpb2_2_sf"/>
</dbReference>
<dbReference type="InterPro" id="IPR007645">
    <property type="entry name" value="RNA_pol_Rpb2_3"/>
</dbReference>
<dbReference type="InterPro" id="IPR007641">
    <property type="entry name" value="RNA_pol_Rpb2_7"/>
</dbReference>
<dbReference type="InterPro" id="IPR014724">
    <property type="entry name" value="RNA_pol_RPB2_OB-fold"/>
</dbReference>
<dbReference type="NCBIfam" id="NF001616">
    <property type="entry name" value="PRK00405.1"/>
    <property type="match status" value="1"/>
</dbReference>
<dbReference type="NCBIfam" id="TIGR02013">
    <property type="entry name" value="rpoB"/>
    <property type="match status" value="1"/>
</dbReference>
<dbReference type="PANTHER" id="PTHR20856">
    <property type="entry name" value="DNA-DIRECTED RNA POLYMERASE I SUBUNIT 2"/>
    <property type="match status" value="1"/>
</dbReference>
<dbReference type="Pfam" id="PF04563">
    <property type="entry name" value="RNA_pol_Rpb2_1"/>
    <property type="match status" value="1"/>
</dbReference>
<dbReference type="Pfam" id="PF04561">
    <property type="entry name" value="RNA_pol_Rpb2_2"/>
    <property type="match status" value="2"/>
</dbReference>
<dbReference type="Pfam" id="PF04565">
    <property type="entry name" value="RNA_pol_Rpb2_3"/>
    <property type="match status" value="1"/>
</dbReference>
<dbReference type="Pfam" id="PF10385">
    <property type="entry name" value="RNA_pol_Rpb2_45"/>
    <property type="match status" value="1"/>
</dbReference>
<dbReference type="Pfam" id="PF00562">
    <property type="entry name" value="RNA_pol_Rpb2_6"/>
    <property type="match status" value="1"/>
</dbReference>
<dbReference type="Pfam" id="PF04560">
    <property type="entry name" value="RNA_pol_Rpb2_7"/>
    <property type="match status" value="1"/>
</dbReference>
<dbReference type="SUPFAM" id="SSF64484">
    <property type="entry name" value="beta and beta-prime subunits of DNA dependent RNA-polymerase"/>
    <property type="match status" value="1"/>
</dbReference>
<dbReference type="PROSITE" id="PS01166">
    <property type="entry name" value="RNA_POL_BETA"/>
    <property type="match status" value="1"/>
</dbReference>
<sequence>MVYSYSEKKRIRKDFGKRPKVLDIPYLLSIQLDSFKKFTDHDPTGERGLEAAFRSVFPIKSFSGYSELQYVSYKLGEPVFDVKECQIRGVTYSAPLRVKLRMVLFDREAAAGTVKDIKEQEVYMGDIPMMTNNGTFVINGTERVIVSQLHRSPGVFFDHDRGKTHSSGKVLYNARIIPYRGSWLDFEFDPKDALFVRIDRRRKLPATIILRALEYSTQDILDLFFERIEFKIKKDSLVMALVPDRLRGETAGYDIKDAEGALLVEAGRRITARHIKQLEKTNTTELEVPVDYIVGKYAAQDYIDEDTGEVLVTANSEITLEDLAKLSLAGIKNIDTLFINDLDHGAYIADTLRIDSTTNRLEALVEIYRMMRPGEPPTKDAAEGLFQNLFFSEERYDLSKVGRMKFNRRLEIAEDEGNGVLSKEDIVSVMKKIIEIRNGYDEVDDIDHLGNRRIRSVGEMAENQFRVGLVRVERAVRERLSLGDLNELMPQDLINAKPISAAVKEFFGSSQLSQFMDQNNPLSEVTHKRRISALGPGGLTRERAGFEVRDVHPTHYGRLCPIETPEGPNIGLINSLASFARTNSYGFLETPYRKVVDGVITDDVEYLSAIEEGRYVIAQANIEVDADGRMAEEQIACRHKGESTFMRAADVQYMDVSPQQIISVAASLIPFLEHDDANRALMGANMQRQAVPTLRADKPLVGTGIERTLAVDSGVVVAAKRGGVVDYVDASRIVVKVNEDELHAGEAGIDIYNLTKYTRSNQNTCINQRPCCSVGEPVVRGDVLADGPSTDLGDLALGQNMRIAFMPWNGYNFEDSILISERVAQEDRFTTIHIQELSCIARDTKLGSEEITADIPNVGESALSKLDESGIVYIGAEVKGGDILVGKVTPKGETQLTPEEKLLRAIFGEKASDVKDSSLRVPNSVKGTIIDVQVFTRDGVEKDKRALEIEDMHVRQARKDLGEEFKILEEGVLGRARNLLLSVGYSEAKLAEIPRKDVLIQVIDDETKQTELEQLAEQHEELKADFDKTFEIKRRKITQGDDLAPGVLKIVKVYLAVKRTIQPGDKMAGRHGNKGVISKICPVEDMPYDEEGNPVDIVLNPLGVPSRMNIGQVLEVHMGAAAKGIGNKITAMLEEQREIAELRGYIKQVYELGDDVLQRVDIDSFTDDEVVRLATNLKGGIPIATPAFDGAKEKEIKQMLALAGLPESGQLTLCDGRTGNEFERKVTVGYMYMLKLNHLVDDKMHARSTGSYSLVTQQPLGGKAQFGGQRFGEMEVWALEAYGAAYTLQEMLTVKSDDVNGRTQMYKNIVDGNHQMQPGMPESFNVLLKEIRSLGINIELDQE</sequence>
<proteinExistence type="inferred from homology"/>
<evidence type="ECO:0000255" key="1">
    <source>
        <dbReference type="HAMAP-Rule" id="MF_01321"/>
    </source>
</evidence>
<organism>
    <name type="scientific">Shewanella frigidimarina (strain NCIMB 400)</name>
    <dbReference type="NCBI Taxonomy" id="318167"/>
    <lineage>
        <taxon>Bacteria</taxon>
        <taxon>Pseudomonadati</taxon>
        <taxon>Pseudomonadota</taxon>
        <taxon>Gammaproteobacteria</taxon>
        <taxon>Alteromonadales</taxon>
        <taxon>Shewanellaceae</taxon>
        <taxon>Shewanella</taxon>
    </lineage>
</organism>
<reference key="1">
    <citation type="submission" date="2006-08" db="EMBL/GenBank/DDBJ databases">
        <title>Complete sequence of Shewanella frigidimarina NCIMB 400.</title>
        <authorList>
            <consortium name="US DOE Joint Genome Institute"/>
            <person name="Copeland A."/>
            <person name="Lucas S."/>
            <person name="Lapidus A."/>
            <person name="Barry K."/>
            <person name="Detter J.C."/>
            <person name="Glavina del Rio T."/>
            <person name="Hammon N."/>
            <person name="Israni S."/>
            <person name="Dalin E."/>
            <person name="Tice H."/>
            <person name="Pitluck S."/>
            <person name="Fredrickson J.K."/>
            <person name="Kolker E."/>
            <person name="McCuel L.A."/>
            <person name="DiChristina T."/>
            <person name="Nealson K.H."/>
            <person name="Newman D."/>
            <person name="Tiedje J.M."/>
            <person name="Zhou J."/>
            <person name="Romine M.F."/>
            <person name="Culley D.E."/>
            <person name="Serres M."/>
            <person name="Chertkov O."/>
            <person name="Brettin T."/>
            <person name="Bruce D."/>
            <person name="Han C."/>
            <person name="Tapia R."/>
            <person name="Gilna P."/>
            <person name="Schmutz J."/>
            <person name="Larimer F."/>
            <person name="Land M."/>
            <person name="Hauser L."/>
            <person name="Kyrpides N."/>
            <person name="Mikhailova N."/>
            <person name="Richardson P."/>
        </authorList>
    </citation>
    <scope>NUCLEOTIDE SEQUENCE [LARGE SCALE GENOMIC DNA]</scope>
    <source>
        <strain>NCIMB 400</strain>
    </source>
</reference>
<keyword id="KW-0240">DNA-directed RNA polymerase</keyword>
<keyword id="KW-0548">Nucleotidyltransferase</keyword>
<keyword id="KW-1185">Reference proteome</keyword>
<keyword id="KW-0804">Transcription</keyword>
<keyword id="KW-0808">Transferase</keyword>
<gene>
    <name evidence="1" type="primary">rpoB</name>
    <name type="ordered locus">Sfri_0141</name>
</gene>
<feature type="chain" id="PRO_0000300398" description="DNA-directed RNA polymerase subunit beta">
    <location>
        <begin position="1"/>
        <end position="1343"/>
    </location>
</feature>
<comment type="function">
    <text evidence="1">DNA-dependent RNA polymerase catalyzes the transcription of DNA into RNA using the four ribonucleoside triphosphates as substrates.</text>
</comment>
<comment type="catalytic activity">
    <reaction evidence="1">
        <text>RNA(n) + a ribonucleoside 5'-triphosphate = RNA(n+1) + diphosphate</text>
        <dbReference type="Rhea" id="RHEA:21248"/>
        <dbReference type="Rhea" id="RHEA-COMP:14527"/>
        <dbReference type="Rhea" id="RHEA-COMP:17342"/>
        <dbReference type="ChEBI" id="CHEBI:33019"/>
        <dbReference type="ChEBI" id="CHEBI:61557"/>
        <dbReference type="ChEBI" id="CHEBI:140395"/>
        <dbReference type="EC" id="2.7.7.6"/>
    </reaction>
</comment>
<comment type="subunit">
    <text evidence="1">The RNAP catalytic core consists of 2 alpha, 1 beta, 1 beta' and 1 omega subunit. When a sigma factor is associated with the core the holoenzyme is formed, which can initiate transcription.</text>
</comment>
<comment type="similarity">
    <text evidence="1">Belongs to the RNA polymerase beta chain family.</text>
</comment>
<protein>
    <recommendedName>
        <fullName evidence="1">DNA-directed RNA polymerase subunit beta</fullName>
        <shortName evidence="1">RNAP subunit beta</shortName>
        <ecNumber evidence="1">2.7.7.6</ecNumber>
    </recommendedName>
    <alternativeName>
        <fullName evidence="1">RNA polymerase subunit beta</fullName>
    </alternativeName>
    <alternativeName>
        <fullName evidence="1">Transcriptase subunit beta</fullName>
    </alternativeName>
</protein>
<name>RPOB_SHEFN</name>
<accession>Q089R1</accession>